<gene>
    <name type="primary">tub</name>
    <name type="synonym">tube</name>
    <name type="ORF">CG10520</name>
</gene>
<evidence type="ECO:0000256" key="1">
    <source>
        <dbReference type="SAM" id="MobiDB-lite"/>
    </source>
</evidence>
<evidence type="ECO:0000269" key="2">
    <source>
    </source>
</evidence>
<evidence type="ECO:0000269" key="3">
    <source>
    </source>
</evidence>
<evidence type="ECO:0000269" key="4">
    <source>
    </source>
</evidence>
<evidence type="ECO:0000269" key="5">
    <source>
    </source>
</evidence>
<evidence type="ECO:0000269" key="6">
    <source>
    </source>
</evidence>
<evidence type="ECO:0000269" key="7">
    <source>
    </source>
</evidence>
<evidence type="ECO:0000305" key="8"/>
<evidence type="ECO:0000312" key="9">
    <source>
        <dbReference type="EMBL" id="ADV15463.1"/>
    </source>
</evidence>
<evidence type="ECO:0007829" key="10">
    <source>
        <dbReference type="PDB" id="1D2Z"/>
    </source>
</evidence>
<sequence length="462" mass="49776">MAYGWNGCGMGVQVNGSNGAIGLSSKYSRNTELRRVEDNDIYRLAKILDENSCWRKLMSIIPKGMDVQACSGAGCLNFPAEIKKGFKYTAQDVFQIDEAANRLPPDQSKSQMMIDEWKTSGKLNERPTVGVLLQLLVQAELFSAADFVALDFLNESTPARPVDGPGALISLELLEEEMEVDNEGLSLKYQSSTATLGADAQGSVGLNLDNFEKDIVRRDKSVPQPSGNTPPIAPPRRQQRSTTNSNFATLTGTGTTSTTIPNVPNLTILNPSEQIQEPVLQPRPMNIPDLSILISNSGDLRATVSDNPSNRTSSTDPPNIPRITLLIDNSGDVNSRPNHAPAKASTATTSTASSNNLPMISALNISKGSRETLRPESRSSSSSLSKDDDDDNDGEEDGEEEYPDAFLPNLSNSEQQSSNNDSSLTTVTGTSGDNSFELTNDSSSTSNDDYACNIPDLSELQQ</sequence>
<keyword id="KW-0002">3D-structure</keyword>
<keyword id="KW-1003">Cell membrane</keyword>
<keyword id="KW-0963">Cytoplasm</keyword>
<keyword id="KW-0217">Developmental protein</keyword>
<keyword id="KW-0472">Membrane</keyword>
<keyword id="KW-1185">Reference proteome</keyword>
<keyword id="KW-0677">Repeat</keyword>
<keyword id="KW-0807">Transducer</keyword>
<organism>
    <name type="scientific">Drosophila melanogaster</name>
    <name type="common">Fruit fly</name>
    <dbReference type="NCBI Taxonomy" id="7227"/>
    <lineage>
        <taxon>Eukaryota</taxon>
        <taxon>Metazoa</taxon>
        <taxon>Ecdysozoa</taxon>
        <taxon>Arthropoda</taxon>
        <taxon>Hexapoda</taxon>
        <taxon>Insecta</taxon>
        <taxon>Pterygota</taxon>
        <taxon>Neoptera</taxon>
        <taxon>Endopterygota</taxon>
        <taxon>Diptera</taxon>
        <taxon>Brachycera</taxon>
        <taxon>Muscomorpha</taxon>
        <taxon>Ephydroidea</taxon>
        <taxon>Drosophilidae</taxon>
        <taxon>Drosophila</taxon>
        <taxon>Sophophora</taxon>
    </lineage>
</organism>
<comment type="function">
    <text evidence="2 4 5 6 7">Plays an essential role in the Tl receptor signaling pathway that establishes embryonic dorsoventral polarity; the signal directs import of dl into ventral and ventrolateral nuclei, thereby establishing dorsoventral polarity. Tub recruits pll to the plasma membrane and protein-protein interaction activates pll. Also has a role in pupal pattern formation.</text>
</comment>
<comment type="subunit">
    <text evidence="2 3 5 6">Interacts (via Death domain) with pll (via Death domain).</text>
</comment>
<comment type="interaction">
    <interactant intactId="EBI-93181">
        <id>P22812</id>
    </interactant>
    <interactant intactId="EBI-198375">
        <id>P15330</id>
        <label>dl</label>
    </interactant>
    <organismsDiffer>false</organismsDiffer>
    <experiments>3</experiments>
</comment>
<comment type="interaction">
    <interactant intactId="EBI-93181">
        <id>P22812</id>
    </interactant>
    <interactant intactId="EBI-129988">
        <id>Q7K105</id>
        <label>Myd88</label>
    </interactant>
    <organismsDiffer>false</organismsDiffer>
    <experiments>2</experiments>
</comment>
<comment type="interaction">
    <interactant intactId="EBI-93181">
        <id>P22812</id>
    </interactant>
    <interactant intactId="EBI-115059">
        <id>Q05652</id>
        <label>pll</label>
    </interactant>
    <organismsDiffer>false</organismsDiffer>
    <experiments>9</experiments>
</comment>
<comment type="subcellular location">
    <subcellularLocation>
        <location evidence="6">Cytoplasm</location>
    </subcellularLocation>
    <subcellularLocation>
        <location evidence="6">Cell membrane</location>
    </subcellularLocation>
    <text>Associates with the plasma membrane during interphase syncytial blastoderm embryos, more specifically at the membrane invaginations around the nuclei. Later in embryonic development protein is entirely cytoplasmic.</text>
</comment>
<comment type="developmental stage">
    <text evidence="4">Expressed both maternally and zygotically. Zygotic expression is highest in late larval development.</text>
</comment>
<comment type="PTM">
    <text evidence="5">Phosphorylated by pll.</text>
</comment>
<feature type="chain" id="PRO_0000065694" description="Protein Tube">
    <location>
        <begin position="1"/>
        <end position="462"/>
    </location>
</feature>
<feature type="domain" description="Death">
    <location>
        <begin position="27"/>
        <end position="152"/>
    </location>
</feature>
<feature type="repeat" description="1">
    <location>
        <begin position="262"/>
        <end position="269"/>
    </location>
</feature>
<feature type="repeat" description="2">
    <location>
        <begin position="286"/>
        <end position="293"/>
    </location>
</feature>
<feature type="repeat" description="3">
    <location>
        <begin position="319"/>
        <end position="326"/>
    </location>
</feature>
<feature type="repeat" description="4">
    <location>
        <begin position="356"/>
        <end position="363"/>
    </location>
</feature>
<feature type="repeat" description="5">
    <location>
        <begin position="453"/>
        <end position="460"/>
    </location>
</feature>
<feature type="region of interest" description="Disordered" evidence="1">
    <location>
        <begin position="218"/>
        <end position="265"/>
    </location>
</feature>
<feature type="region of interest" description="5 X approximate repeats">
    <location>
        <begin position="262"/>
        <end position="460"/>
    </location>
</feature>
<feature type="region of interest" description="Disordered" evidence="1">
    <location>
        <begin position="301"/>
        <end position="462"/>
    </location>
</feature>
<feature type="compositionally biased region" description="Low complexity" evidence="1">
    <location>
        <begin position="249"/>
        <end position="259"/>
    </location>
</feature>
<feature type="compositionally biased region" description="Polar residues" evidence="1">
    <location>
        <begin position="301"/>
        <end position="317"/>
    </location>
</feature>
<feature type="compositionally biased region" description="Low complexity" evidence="1">
    <location>
        <begin position="342"/>
        <end position="354"/>
    </location>
</feature>
<feature type="compositionally biased region" description="Polar residues" evidence="1">
    <location>
        <begin position="355"/>
        <end position="367"/>
    </location>
</feature>
<feature type="compositionally biased region" description="Basic and acidic residues" evidence="1">
    <location>
        <begin position="368"/>
        <end position="377"/>
    </location>
</feature>
<feature type="compositionally biased region" description="Acidic residues" evidence="1">
    <location>
        <begin position="387"/>
        <end position="403"/>
    </location>
</feature>
<feature type="compositionally biased region" description="Low complexity" evidence="1">
    <location>
        <begin position="409"/>
        <end position="424"/>
    </location>
</feature>
<feature type="compositionally biased region" description="Polar residues" evidence="1">
    <location>
        <begin position="425"/>
        <end position="438"/>
    </location>
</feature>
<feature type="compositionally biased region" description="Low complexity" evidence="1">
    <location>
        <begin position="439"/>
        <end position="449"/>
    </location>
</feature>
<feature type="sequence conflict" description="In Ref. 1; AAA28994." evidence="8" ref="1">
    <original>S</original>
    <variation>P</variation>
    <location>
        <position position="350"/>
    </location>
</feature>
<feature type="sequence conflict" description="In Ref. 1; AAA28994." evidence="8" ref="1">
    <original>R</original>
    <variation>K</variation>
    <location>
        <position position="370"/>
    </location>
</feature>
<feature type="helix" evidence="10">
    <location>
        <begin position="33"/>
        <end position="35"/>
    </location>
</feature>
<feature type="helix" evidence="10">
    <location>
        <begin position="38"/>
        <end position="49"/>
    </location>
</feature>
<feature type="helix" evidence="10">
    <location>
        <begin position="50"/>
        <end position="52"/>
    </location>
</feature>
<feature type="helix" evidence="10">
    <location>
        <begin position="53"/>
        <end position="60"/>
    </location>
</feature>
<feature type="strand" evidence="10">
    <location>
        <begin position="62"/>
        <end position="64"/>
    </location>
</feature>
<feature type="helix" evidence="10">
    <location>
        <begin position="67"/>
        <end position="71"/>
    </location>
</feature>
<feature type="helix" evidence="10">
    <location>
        <begin position="78"/>
        <end position="81"/>
    </location>
</feature>
<feature type="helix" evidence="10">
    <location>
        <begin position="82"/>
        <end position="84"/>
    </location>
</feature>
<feature type="strand" evidence="10">
    <location>
        <begin position="86"/>
        <end position="88"/>
    </location>
</feature>
<feature type="helix" evidence="10">
    <location>
        <begin position="90"/>
        <end position="102"/>
    </location>
</feature>
<feature type="helix" evidence="10">
    <location>
        <begin position="109"/>
        <end position="118"/>
    </location>
</feature>
<feature type="strand" evidence="10">
    <location>
        <begin position="121"/>
        <end position="123"/>
    </location>
</feature>
<feature type="helix" evidence="10">
    <location>
        <begin position="129"/>
        <end position="138"/>
    </location>
</feature>
<feature type="helix" evidence="10">
    <location>
        <begin position="142"/>
        <end position="151"/>
    </location>
</feature>
<feature type="strand" evidence="10">
    <location>
        <begin position="162"/>
        <end position="164"/>
    </location>
</feature>
<protein>
    <recommendedName>
        <fullName>Protein Tube</fullName>
    </recommendedName>
</protein>
<name>TUBE_DROME</name>
<proteinExistence type="evidence at protein level"/>
<reference key="1">
    <citation type="journal article" date="1991" name="Proc. Natl. Acad. Sci. U.S.A.">
        <title>Genetic and molecular characterization of tube, a Drosophila gene maternally required for embryonic dorsoventral polarity.</title>
        <authorList>
            <person name="Letsou A."/>
            <person name="Alexander S."/>
            <person name="Orth K."/>
            <person name="Wasserman S.A."/>
        </authorList>
    </citation>
    <scope>NUCLEOTIDE SEQUENCE [MRNA]</scope>
    <scope>FUNCTION</scope>
    <scope>DEVELOPMENTAL STAGE</scope>
</reference>
<reference key="2">
    <citation type="journal article" date="2000" name="Science">
        <title>The genome sequence of Drosophila melanogaster.</title>
        <authorList>
            <person name="Adams M.D."/>
            <person name="Celniker S.E."/>
            <person name="Holt R.A."/>
            <person name="Evans C.A."/>
            <person name="Gocayne J.D."/>
            <person name="Amanatides P.G."/>
            <person name="Scherer S.E."/>
            <person name="Li P.W."/>
            <person name="Hoskins R.A."/>
            <person name="Galle R.F."/>
            <person name="George R.A."/>
            <person name="Lewis S.E."/>
            <person name="Richards S."/>
            <person name="Ashburner M."/>
            <person name="Henderson S.N."/>
            <person name="Sutton G.G."/>
            <person name="Wortman J.R."/>
            <person name="Yandell M.D."/>
            <person name="Zhang Q."/>
            <person name="Chen L.X."/>
            <person name="Brandon R.C."/>
            <person name="Rogers Y.-H.C."/>
            <person name="Blazej R.G."/>
            <person name="Champe M."/>
            <person name="Pfeiffer B.D."/>
            <person name="Wan K.H."/>
            <person name="Doyle C."/>
            <person name="Baxter E.G."/>
            <person name="Helt G."/>
            <person name="Nelson C.R."/>
            <person name="Miklos G.L.G."/>
            <person name="Abril J.F."/>
            <person name="Agbayani A."/>
            <person name="An H.-J."/>
            <person name="Andrews-Pfannkoch C."/>
            <person name="Baldwin D."/>
            <person name="Ballew R.M."/>
            <person name="Basu A."/>
            <person name="Baxendale J."/>
            <person name="Bayraktaroglu L."/>
            <person name="Beasley E.M."/>
            <person name="Beeson K.Y."/>
            <person name="Benos P.V."/>
            <person name="Berman B.P."/>
            <person name="Bhandari D."/>
            <person name="Bolshakov S."/>
            <person name="Borkova D."/>
            <person name="Botchan M.R."/>
            <person name="Bouck J."/>
            <person name="Brokstein P."/>
            <person name="Brottier P."/>
            <person name="Burtis K.C."/>
            <person name="Busam D.A."/>
            <person name="Butler H."/>
            <person name="Cadieu E."/>
            <person name="Center A."/>
            <person name="Chandra I."/>
            <person name="Cherry J.M."/>
            <person name="Cawley S."/>
            <person name="Dahlke C."/>
            <person name="Davenport L.B."/>
            <person name="Davies P."/>
            <person name="de Pablos B."/>
            <person name="Delcher A."/>
            <person name="Deng Z."/>
            <person name="Mays A.D."/>
            <person name="Dew I."/>
            <person name="Dietz S.M."/>
            <person name="Dodson K."/>
            <person name="Doup L.E."/>
            <person name="Downes M."/>
            <person name="Dugan-Rocha S."/>
            <person name="Dunkov B.C."/>
            <person name="Dunn P."/>
            <person name="Durbin K.J."/>
            <person name="Evangelista C.C."/>
            <person name="Ferraz C."/>
            <person name="Ferriera S."/>
            <person name="Fleischmann W."/>
            <person name="Fosler C."/>
            <person name="Gabrielian A.E."/>
            <person name="Garg N.S."/>
            <person name="Gelbart W.M."/>
            <person name="Glasser K."/>
            <person name="Glodek A."/>
            <person name="Gong F."/>
            <person name="Gorrell J.H."/>
            <person name="Gu Z."/>
            <person name="Guan P."/>
            <person name="Harris M."/>
            <person name="Harris N.L."/>
            <person name="Harvey D.A."/>
            <person name="Heiman T.J."/>
            <person name="Hernandez J.R."/>
            <person name="Houck J."/>
            <person name="Hostin D."/>
            <person name="Houston K.A."/>
            <person name="Howland T.J."/>
            <person name="Wei M.-H."/>
            <person name="Ibegwam C."/>
            <person name="Jalali M."/>
            <person name="Kalush F."/>
            <person name="Karpen G.H."/>
            <person name="Ke Z."/>
            <person name="Kennison J.A."/>
            <person name="Ketchum K.A."/>
            <person name="Kimmel B.E."/>
            <person name="Kodira C.D."/>
            <person name="Kraft C.L."/>
            <person name="Kravitz S."/>
            <person name="Kulp D."/>
            <person name="Lai Z."/>
            <person name="Lasko P."/>
            <person name="Lei Y."/>
            <person name="Levitsky A.A."/>
            <person name="Li J.H."/>
            <person name="Li Z."/>
            <person name="Liang Y."/>
            <person name="Lin X."/>
            <person name="Liu X."/>
            <person name="Mattei B."/>
            <person name="McIntosh T.C."/>
            <person name="McLeod M.P."/>
            <person name="McPherson D."/>
            <person name="Merkulov G."/>
            <person name="Milshina N.V."/>
            <person name="Mobarry C."/>
            <person name="Morris J."/>
            <person name="Moshrefi A."/>
            <person name="Mount S.M."/>
            <person name="Moy M."/>
            <person name="Murphy B."/>
            <person name="Murphy L."/>
            <person name="Muzny D.M."/>
            <person name="Nelson D.L."/>
            <person name="Nelson D.R."/>
            <person name="Nelson K.A."/>
            <person name="Nixon K."/>
            <person name="Nusskern D.R."/>
            <person name="Pacleb J.M."/>
            <person name="Palazzolo M."/>
            <person name="Pittman G.S."/>
            <person name="Pan S."/>
            <person name="Pollard J."/>
            <person name="Puri V."/>
            <person name="Reese M.G."/>
            <person name="Reinert K."/>
            <person name="Remington K."/>
            <person name="Saunders R.D.C."/>
            <person name="Scheeler F."/>
            <person name="Shen H."/>
            <person name="Shue B.C."/>
            <person name="Siden-Kiamos I."/>
            <person name="Simpson M."/>
            <person name="Skupski M.P."/>
            <person name="Smith T.J."/>
            <person name="Spier E."/>
            <person name="Spradling A.C."/>
            <person name="Stapleton M."/>
            <person name="Strong R."/>
            <person name="Sun E."/>
            <person name="Svirskas R."/>
            <person name="Tector C."/>
            <person name="Turner R."/>
            <person name="Venter E."/>
            <person name="Wang A.H."/>
            <person name="Wang X."/>
            <person name="Wang Z.-Y."/>
            <person name="Wassarman D.A."/>
            <person name="Weinstock G.M."/>
            <person name="Weissenbach J."/>
            <person name="Williams S.M."/>
            <person name="Woodage T."/>
            <person name="Worley K.C."/>
            <person name="Wu D."/>
            <person name="Yang S."/>
            <person name="Yao Q.A."/>
            <person name="Ye J."/>
            <person name="Yeh R.-F."/>
            <person name="Zaveri J.S."/>
            <person name="Zhan M."/>
            <person name="Zhang G."/>
            <person name="Zhao Q."/>
            <person name="Zheng L."/>
            <person name="Zheng X.H."/>
            <person name="Zhong F.N."/>
            <person name="Zhong W."/>
            <person name="Zhou X."/>
            <person name="Zhu S.C."/>
            <person name="Zhu X."/>
            <person name="Smith H.O."/>
            <person name="Gibbs R.A."/>
            <person name="Myers E.W."/>
            <person name="Rubin G.M."/>
            <person name="Venter J.C."/>
        </authorList>
    </citation>
    <scope>NUCLEOTIDE SEQUENCE [LARGE SCALE GENOMIC DNA]</scope>
    <source>
        <strain>Berkeley</strain>
    </source>
</reference>
<reference key="3">
    <citation type="journal article" date="2002" name="Genome Biol.">
        <title>Annotation of the Drosophila melanogaster euchromatic genome: a systematic review.</title>
        <authorList>
            <person name="Misra S."/>
            <person name="Crosby M.A."/>
            <person name="Mungall C.J."/>
            <person name="Matthews B.B."/>
            <person name="Campbell K.S."/>
            <person name="Hradecky P."/>
            <person name="Huang Y."/>
            <person name="Kaminker J.S."/>
            <person name="Millburn G.H."/>
            <person name="Prochnik S.E."/>
            <person name="Smith C.D."/>
            <person name="Tupy J.L."/>
            <person name="Whitfield E.J."/>
            <person name="Bayraktaroglu L."/>
            <person name="Berman B.P."/>
            <person name="Bettencourt B.R."/>
            <person name="Celniker S.E."/>
            <person name="de Grey A.D.N.J."/>
            <person name="Drysdale R.A."/>
            <person name="Harris N.L."/>
            <person name="Richter J."/>
            <person name="Russo S."/>
            <person name="Schroeder A.J."/>
            <person name="Shu S.Q."/>
            <person name="Stapleton M."/>
            <person name="Yamada C."/>
            <person name="Ashburner M."/>
            <person name="Gelbart W.M."/>
            <person name="Rubin G.M."/>
            <person name="Lewis S.E."/>
        </authorList>
    </citation>
    <scope>GENOME REANNOTATION</scope>
    <source>
        <strain>Berkeley</strain>
    </source>
</reference>
<reference key="4">
    <citation type="journal article" date="2002" name="Genome Biol.">
        <title>A Drosophila full-length cDNA resource.</title>
        <authorList>
            <person name="Stapleton M."/>
            <person name="Carlson J.W."/>
            <person name="Brokstein P."/>
            <person name="Yu C."/>
            <person name="Champe M."/>
            <person name="George R.A."/>
            <person name="Guarin H."/>
            <person name="Kronmiller B."/>
            <person name="Pacleb J.M."/>
            <person name="Park S."/>
            <person name="Wan K.H."/>
            <person name="Rubin G.M."/>
            <person name="Celniker S.E."/>
        </authorList>
    </citation>
    <scope>NUCLEOTIDE SEQUENCE [LARGE SCALE MRNA]</scope>
    <source>
        <strain>Berkeley</strain>
        <tissue>Embryo</tissue>
    </source>
</reference>
<reference key="5">
    <citation type="submission" date="2011-01" db="EMBL/GenBank/DDBJ databases">
        <authorList>
            <person name="Carlson J."/>
            <person name="Booth B."/>
            <person name="Frise E."/>
            <person name="Park S."/>
            <person name="Wan K."/>
            <person name="Yu C."/>
            <person name="Celniker S."/>
        </authorList>
    </citation>
    <scope>NUCLEOTIDE SEQUENCE [LARGE SCALE MRNA]</scope>
    <source>
        <strain evidence="9">Berkeley</strain>
    </source>
</reference>
<reference key="6">
    <citation type="journal article" date="1993" name="EMBO J.">
        <title>Domain mapping of tube, a protein essential for dorsoventral patterning of the Drosophila embryo.</title>
        <authorList>
            <person name="Letsou A."/>
            <person name="Alexander S."/>
            <person name="Wasserman S.A."/>
        </authorList>
    </citation>
    <scope>FUNCTION</scope>
</reference>
<reference key="7">
    <citation type="journal article" date="1994" name="Nature">
        <title>Activation of the kinase Pelle by Tube in the dorsoventral signal transduction pathway of Drosophila embryo.</title>
        <authorList>
            <person name="Grosshans J."/>
            <person name="Bergmann A."/>
            <person name="Haffter P."/>
            <person name="Nuesslein-Volhard C."/>
        </authorList>
    </citation>
    <scope>FUNCTION</scope>
    <scope>INTERACTION WITH PLL</scope>
    <scope>PHOSPHORYLATION</scope>
</reference>
<reference key="8">
    <citation type="journal article" date="1995" name="Development">
        <title>Interaction of the pelle kinase with the membrane-associated protein tube is required for transduction of the dorsoventral signal in Drosophila embryos.</title>
        <authorList>
            <person name="Galindo R.L."/>
            <person name="Edwards D.N."/>
            <person name="Gillespie S.K.H."/>
            <person name="Wasserman S.A."/>
        </authorList>
    </citation>
    <scope>FUNCTION</scope>
    <scope>INTERACTION WITH PLL</scope>
    <scope>SUBCELLULAR LOCATION</scope>
</reference>
<reference key="9">
    <citation type="journal article" date="1999" name="Biochemistry">
        <title>Formation and biochemical characterization of tube/pelle death domain complexes: critical regulators of postreceptor signaling by the Drosophila toll receptor.</title>
        <authorList>
            <person name="Schiffmann D.A."/>
            <person name="White J.H.M."/>
            <person name="Cooper A."/>
            <person name="Nutley M.A."/>
            <person name="Harding S.E."/>
            <person name="Jumel K."/>
            <person name="Solari R."/>
            <person name="Ray K.P."/>
            <person name="Gay N.J."/>
        </authorList>
    </citation>
    <scope>FUNCTION</scope>
    <scope>INTERACTION WITH PLL</scope>
</reference>
<reference key="10">
    <citation type="journal article" date="1999" name="Cell">
        <title>Three-dimensional structure of a complex between the death domains of Pelle and Tube.</title>
        <authorList>
            <person name="Xiao T."/>
            <person name="Towb P."/>
            <person name="Wasserman S.A."/>
            <person name="Sprang S.R."/>
        </authorList>
    </citation>
    <scope>X-RAY CRYSTALLOGRAPHY (2.0 ANGSTROMS) OF 23-176 IN COMPLEX WITH PLL</scope>
</reference>
<dbReference type="EMBL" id="M59501">
    <property type="protein sequence ID" value="AAA28994.1"/>
    <property type="molecule type" value="mRNA"/>
</dbReference>
<dbReference type="EMBL" id="AE014297">
    <property type="protein sequence ID" value="ADV37257.1"/>
    <property type="molecule type" value="Genomic_DNA"/>
</dbReference>
<dbReference type="EMBL" id="AY061215">
    <property type="protein sequence ID" value="AAL28763.1"/>
    <property type="molecule type" value="mRNA"/>
</dbReference>
<dbReference type="EMBL" id="BT125884">
    <property type="protein sequence ID" value="ADV15463.1"/>
    <property type="molecule type" value="mRNA"/>
</dbReference>
<dbReference type="PIR" id="A37862">
    <property type="entry name" value="A33170"/>
</dbReference>
<dbReference type="RefSeq" id="NP_001189164.1">
    <property type="nucleotide sequence ID" value="NM_001202235.2"/>
</dbReference>
<dbReference type="PDB" id="1D2Z">
    <property type="method" value="X-ray"/>
    <property type="resolution" value="2.00 A"/>
    <property type="chains" value="B/D=23-175"/>
</dbReference>
<dbReference type="PDBsum" id="1D2Z"/>
<dbReference type="SMR" id="P22812"/>
<dbReference type="BioGRID" id="65774">
    <property type="interactions" value="13"/>
</dbReference>
<dbReference type="DIP" id="DIP-27623N"/>
<dbReference type="FunCoup" id="P22812">
    <property type="interactions" value="222"/>
</dbReference>
<dbReference type="IntAct" id="P22812">
    <property type="interactions" value="7"/>
</dbReference>
<dbReference type="MINT" id="P22812"/>
<dbReference type="STRING" id="7227.FBpp0291542"/>
<dbReference type="PaxDb" id="7227-FBpp0271525"/>
<dbReference type="EnsemblMetazoa" id="FBtr0302338">
    <property type="protein sequence ID" value="FBpp0291542"/>
    <property type="gene ID" value="FBgn0003882"/>
</dbReference>
<dbReference type="GeneID" id="40554"/>
<dbReference type="KEGG" id="dme:Dmel_CG10520"/>
<dbReference type="UCSC" id="CG10520-RB">
    <property type="organism name" value="d. melanogaster"/>
</dbReference>
<dbReference type="AGR" id="FB:FBgn0003882"/>
<dbReference type="CTD" id="7275"/>
<dbReference type="FlyBase" id="FBgn0003882">
    <property type="gene designation" value="tub"/>
</dbReference>
<dbReference type="VEuPathDB" id="VectorBase:FBgn0003882"/>
<dbReference type="eggNOG" id="ENOG502S7SQ">
    <property type="taxonomic scope" value="Eukaryota"/>
</dbReference>
<dbReference type="HOGENOM" id="CLU_610120_0_0_1"/>
<dbReference type="InParanoid" id="P22812"/>
<dbReference type="OMA" id="DYACNIP"/>
<dbReference type="OrthoDB" id="4062651at2759"/>
<dbReference type="PhylomeDB" id="P22812"/>
<dbReference type="Reactome" id="R-DME-209442">
    <property type="pathway name" value="Formation of the trans-membrane 'signalling complex'"/>
</dbReference>
<dbReference type="Reactome" id="R-DME-214842">
    <property type="pathway name" value="DL and DIF homodimers bind to TUB and phosphorylated PLL in the TL receptor 'signalling complex'"/>
</dbReference>
<dbReference type="Reactome" id="R-DME-214844">
    <property type="pathway name" value="DL and DIF homodimers complexed with CACT are all phosphorylated in the TL receptor 'signalling complex'"/>
</dbReference>
<dbReference type="Reactome" id="R-DME-214862">
    <property type="pathway name" value="Activated PLL kinase is autophosphorylated in the TL receptor 'signalling complex'"/>
</dbReference>
<dbReference type="Reactome" id="R-DME-214863">
    <property type="pathway name" value="Adaptor protein complex binds to TL receptor at the plasma membrane"/>
</dbReference>
<dbReference type="Reactome" id="R-DME-214869">
    <property type="pathway name" value="Phosphorylated CACT, DL and DIF homodimers dissociate from the TL receptor 'signalling complex'"/>
</dbReference>
<dbReference type="Reactome" id="R-DME-214874">
    <property type="pathway name" value="PLL kinase binds to TUB in the TL receptor 'signalling complex'"/>
</dbReference>
<dbReference type="BioGRID-ORCS" id="40554">
    <property type="hits" value="0 hits in 1 CRISPR screen"/>
</dbReference>
<dbReference type="EvolutionaryTrace" id="P22812"/>
<dbReference type="GenomeRNAi" id="40554"/>
<dbReference type="PRO" id="PR:P22812"/>
<dbReference type="Proteomes" id="UP000000803">
    <property type="component" value="Chromosome 3R"/>
</dbReference>
<dbReference type="Bgee" id="FBgn0003882">
    <property type="expression patterns" value="Expressed in embryonic/larval hemocyte (Drosophila) and 130 other cell types or tissues"/>
</dbReference>
<dbReference type="GO" id="GO:0005737">
    <property type="term" value="C:cytoplasm"/>
    <property type="evidence" value="ECO:0000314"/>
    <property type="project" value="UniProtKB"/>
</dbReference>
<dbReference type="GO" id="GO:0009898">
    <property type="term" value="C:cytoplasmic side of plasma membrane"/>
    <property type="evidence" value="ECO:0000314"/>
    <property type="project" value="FlyBase"/>
</dbReference>
<dbReference type="GO" id="GO:0005829">
    <property type="term" value="C:cytosol"/>
    <property type="evidence" value="ECO:0000314"/>
    <property type="project" value="FlyBase"/>
</dbReference>
<dbReference type="GO" id="GO:0005634">
    <property type="term" value="C:nucleus"/>
    <property type="evidence" value="ECO:0000318"/>
    <property type="project" value="GO_Central"/>
</dbReference>
<dbReference type="GO" id="GO:0005886">
    <property type="term" value="C:plasma membrane"/>
    <property type="evidence" value="ECO:0000314"/>
    <property type="project" value="UniProtKB"/>
</dbReference>
<dbReference type="GO" id="GO:0019904">
    <property type="term" value="F:protein domain specific binding"/>
    <property type="evidence" value="ECO:0000353"/>
    <property type="project" value="UniProtKB"/>
</dbReference>
<dbReference type="GO" id="GO:1990782">
    <property type="term" value="F:protein tyrosine kinase binding"/>
    <property type="evidence" value="ECO:0000353"/>
    <property type="project" value="FlyBase"/>
</dbReference>
<dbReference type="GO" id="GO:0006915">
    <property type="term" value="P:apoptotic process"/>
    <property type="evidence" value="ECO:0000303"/>
    <property type="project" value="UniProtKB"/>
</dbReference>
<dbReference type="GO" id="GO:0048262">
    <property type="term" value="P:determination of dorsal/ventral asymmetry"/>
    <property type="evidence" value="ECO:0000315"/>
    <property type="project" value="UniProtKB"/>
</dbReference>
<dbReference type="GO" id="GO:0009953">
    <property type="term" value="P:dorsal/ventral pattern formation"/>
    <property type="evidence" value="ECO:0000315"/>
    <property type="project" value="FlyBase"/>
</dbReference>
<dbReference type="GO" id="GO:0035172">
    <property type="term" value="P:hemocyte proliferation"/>
    <property type="evidence" value="ECO:0000304"/>
    <property type="project" value="FlyBase"/>
</dbReference>
<dbReference type="GO" id="GO:0045087">
    <property type="term" value="P:innate immune response"/>
    <property type="evidence" value="ECO:0000315"/>
    <property type="project" value="FlyBase"/>
</dbReference>
<dbReference type="GO" id="GO:0007526">
    <property type="term" value="P:larval somatic muscle development"/>
    <property type="evidence" value="ECO:0000315"/>
    <property type="project" value="FlyBase"/>
</dbReference>
<dbReference type="GO" id="GO:0031663">
    <property type="term" value="P:lipopolysaccharide-mediated signaling pathway"/>
    <property type="evidence" value="ECO:0000318"/>
    <property type="project" value="GO_Central"/>
</dbReference>
<dbReference type="GO" id="GO:0002804">
    <property type="term" value="P:positive regulation of antifungal peptide production"/>
    <property type="evidence" value="ECO:0000314"/>
    <property type="project" value="FlyBase"/>
</dbReference>
<dbReference type="GO" id="GO:0009620">
    <property type="term" value="P:response to fungus"/>
    <property type="evidence" value="ECO:0000304"/>
    <property type="project" value="FlyBase"/>
</dbReference>
<dbReference type="GO" id="GO:0008063">
    <property type="term" value="P:Toll signaling pathway"/>
    <property type="evidence" value="ECO:0000315"/>
    <property type="project" value="UniProtKB"/>
</dbReference>
<dbReference type="CDD" id="cd08308">
    <property type="entry name" value="Death_Tube"/>
    <property type="match status" value="1"/>
</dbReference>
<dbReference type="FunFam" id="1.10.533.10:FF:000130">
    <property type="entry name" value="Protein Tube"/>
    <property type="match status" value="1"/>
</dbReference>
<dbReference type="Gene3D" id="1.10.533.10">
    <property type="entry name" value="Death Domain, Fas"/>
    <property type="match status" value="1"/>
</dbReference>
<dbReference type="InterPro" id="IPR011029">
    <property type="entry name" value="DEATH-like_dom_sf"/>
</dbReference>
<dbReference type="InterPro" id="IPR000488">
    <property type="entry name" value="Death_dom"/>
</dbReference>
<dbReference type="InterPro" id="IPR029397">
    <property type="entry name" value="Tube_Death"/>
</dbReference>
<dbReference type="Pfam" id="PF14786">
    <property type="entry name" value="Death_2"/>
    <property type="match status" value="1"/>
</dbReference>
<dbReference type="SMART" id="SM00005">
    <property type="entry name" value="DEATH"/>
    <property type="match status" value="1"/>
</dbReference>
<dbReference type="SUPFAM" id="SSF47986">
    <property type="entry name" value="DEATH domain"/>
    <property type="match status" value="1"/>
</dbReference>
<accession>P22812</accession>
<accession>B7Z0I9</accession>
<accession>E8NH30</accession>
<accession>Q9VN15</accession>